<evidence type="ECO:0000250" key="1">
    <source>
        <dbReference type="UniProtKB" id="A7MAZ5"/>
    </source>
</evidence>
<evidence type="ECO:0000250" key="2">
    <source>
        <dbReference type="UniProtKB" id="P43275"/>
    </source>
</evidence>
<evidence type="ECO:0000250" key="3">
    <source>
        <dbReference type="UniProtKB" id="P43277"/>
    </source>
</evidence>
<evidence type="ECO:0000255" key="4">
    <source>
        <dbReference type="PROSITE-ProRule" id="PRU00837"/>
    </source>
</evidence>
<evidence type="ECO:0000256" key="5">
    <source>
        <dbReference type="SAM" id="MobiDB-lite"/>
    </source>
</evidence>
<evidence type="ECO:0000269" key="6">
    <source>
    </source>
</evidence>
<protein>
    <recommendedName>
        <fullName>Histone H1.3</fullName>
    </recommendedName>
</protein>
<comment type="function">
    <text>Histones H1 are necessary for the condensation of nucleosome chains into higher-order structures.</text>
</comment>
<comment type="subcellular location">
    <subcellularLocation>
        <location>Nucleus</location>
    </subcellularLocation>
    <subcellularLocation>
        <location>Chromosome</location>
    </subcellularLocation>
</comment>
<comment type="PTM">
    <text evidence="2">H1 histones are progressively phosphorylated during the cell cycle, becoming maximally phosphorylated during late G2 phase and M phase, and being dephosphorylated sharply thereafter.</text>
</comment>
<comment type="PTM">
    <text evidence="3">Citrullination at Arg-55 (H1R54ci) by PADI4 takes place within the DNA-binding site of H1 and results in its displacement from chromatin and global chromatin decondensation, thereby promoting pluripotency and stem cell maintenance.</text>
</comment>
<comment type="similarity">
    <text evidence="4">Belongs to the histone H1/H5 family.</text>
</comment>
<name>H13_RABIT</name>
<reference key="1">
    <citation type="book" date="1977" name="The molecular biology of the mammalian genetic apparatus">
        <editorList>
            <person name="Ts'o P.O.P."/>
        </editorList>
        <authorList>
            <person name="Cole R.D."/>
        </authorList>
    </citation>
    <scope>PROTEIN SEQUENCE</scope>
</reference>
<reference key="2">
    <citation type="journal article" date="1971" name="J. Biol. Chem.">
        <title>Amino acid sequence and sequence variability of the amino-terminal regions of lysine-rich histones.</title>
        <authorList>
            <person name="Rall S.C."/>
            <person name="Cole R.D."/>
        </authorList>
    </citation>
    <scope>PROTEIN SEQUENCE OF 1-72</scope>
    <scope>ACETYLATION AT SER-1</scope>
</reference>
<reference key="3">
    <citation type="journal article" date="1974" name="J. Biol. Chem.">
        <title>Extension of the amino acid sequence of a lysine-rich histone.</title>
        <authorList>
            <person name="Jones G.M.T."/>
            <person name="Rall S.C."/>
            <person name="Cole R.D."/>
        </authorList>
    </citation>
    <scope>PROTEIN SEQUENCE OF 73-107</scope>
</reference>
<proteinExistence type="evidence at protein level"/>
<organism>
    <name type="scientific">Oryctolagus cuniculus</name>
    <name type="common">Rabbit</name>
    <dbReference type="NCBI Taxonomy" id="9986"/>
    <lineage>
        <taxon>Eukaryota</taxon>
        <taxon>Metazoa</taxon>
        <taxon>Chordata</taxon>
        <taxon>Craniata</taxon>
        <taxon>Vertebrata</taxon>
        <taxon>Euteleostomi</taxon>
        <taxon>Mammalia</taxon>
        <taxon>Eutheria</taxon>
        <taxon>Euarchontoglires</taxon>
        <taxon>Glires</taxon>
        <taxon>Lagomorpha</taxon>
        <taxon>Leporidae</taxon>
        <taxon>Oryctolagus</taxon>
    </lineage>
</organism>
<feature type="chain" id="PRO_0000195921" description="Histone H1.3">
    <location>
        <begin position="1"/>
        <end position="213"/>
    </location>
</feature>
<feature type="domain" description="H15" evidence="4">
    <location>
        <begin position="37"/>
        <end position="110"/>
    </location>
</feature>
<feature type="region of interest" description="Disordered" evidence="5">
    <location>
        <begin position="1"/>
        <end position="41"/>
    </location>
</feature>
<feature type="region of interest" description="Disordered" evidence="5">
    <location>
        <begin position="92"/>
        <end position="213"/>
    </location>
</feature>
<feature type="compositionally biased region" description="Low complexity" evidence="5">
    <location>
        <begin position="1"/>
        <end position="15"/>
    </location>
</feature>
<feature type="compositionally biased region" description="Basic and acidic residues" evidence="5">
    <location>
        <begin position="107"/>
        <end position="119"/>
    </location>
</feature>
<feature type="compositionally biased region" description="Basic residues" evidence="5">
    <location>
        <begin position="120"/>
        <end position="131"/>
    </location>
</feature>
<feature type="compositionally biased region" description="Basic residues" evidence="5">
    <location>
        <begin position="138"/>
        <end position="170"/>
    </location>
</feature>
<feature type="compositionally biased region" description="Basic residues" evidence="5">
    <location>
        <begin position="179"/>
        <end position="213"/>
    </location>
</feature>
<feature type="modified residue" description="N-acetylserine" evidence="6">
    <location>
        <position position="1"/>
    </location>
</feature>
<feature type="modified residue" description="N6-acetyllysine" evidence="3">
    <location>
        <position position="15"/>
    </location>
</feature>
<feature type="modified residue" description="N6-(beta-hydroxybutyryl)lysine" evidence="3">
    <location>
        <position position="35"/>
    </location>
</feature>
<feature type="modified residue" description="N6-(beta-hydroxybutyryl)lysine" evidence="3">
    <location>
        <position position="53"/>
    </location>
</feature>
<feature type="modified residue" description="Citrulline" evidence="3">
    <location>
        <position position="55"/>
    </location>
</feature>
<feature type="modified residue" description="N6-(beta-hydroxybutyryl)lysine" evidence="3">
    <location>
        <position position="65"/>
    </location>
</feature>
<feature type="modified residue" description="N6-(beta-hydroxybutyryl)lysine" evidence="3">
    <location>
        <position position="86"/>
    </location>
</feature>
<feature type="modified residue" description="N6-(beta-hydroxybutyryl)lysine" evidence="3">
    <location>
        <position position="91"/>
    </location>
</feature>
<feature type="modified residue" description="Phosphoserine" evidence="1">
    <location>
        <position position="105"/>
    </location>
</feature>
<feature type="modified residue" description="N6-(beta-hydroxybutyryl)lysine" evidence="3">
    <location>
        <position position="107"/>
    </location>
</feature>
<keyword id="KW-0007">Acetylation</keyword>
<keyword id="KW-0158">Chromosome</keyword>
<keyword id="KW-0164">Citrullination</keyword>
<keyword id="KW-0903">Direct protein sequencing</keyword>
<keyword id="KW-0238">DNA-binding</keyword>
<keyword id="KW-0379">Hydroxylation</keyword>
<keyword id="KW-0539">Nucleus</keyword>
<keyword id="KW-0597">Phosphoprotein</keyword>
<keyword id="KW-1185">Reference proteome</keyword>
<sequence length="213" mass="21423">SEAPAETAAPAPAEKSPAKKKKAAKKPGAGAAKRKAAGPPVSELITKAVAASKERNGLSLAALKKALAAGGYDVEKNNSRIKLGLKSLVSKGTLVETKGTGASGSFKLDKKAASGEAKPKPKKAGAAKPKKPAGATPKKPKKAAGAKKAVKKTPKKAPKPKAAAKPKVAKPKSPAKVAKSPKKAKAVKPKAAKPKAPKPKAAKAKKTAAKKKK</sequence>
<accession>P02251</accession>
<dbReference type="PIR" id="A94467">
    <property type="entry name" value="HSRB13"/>
</dbReference>
<dbReference type="SMR" id="P02251"/>
<dbReference type="FunCoup" id="P02251">
    <property type="interactions" value="173"/>
</dbReference>
<dbReference type="iPTMnet" id="P02251"/>
<dbReference type="PaxDb" id="9986-ENSOCUP00000012397"/>
<dbReference type="InParanoid" id="P02251"/>
<dbReference type="Proteomes" id="UP000001811">
    <property type="component" value="Unplaced"/>
</dbReference>
<dbReference type="GO" id="GO:0000786">
    <property type="term" value="C:nucleosome"/>
    <property type="evidence" value="ECO:0007669"/>
    <property type="project" value="InterPro"/>
</dbReference>
<dbReference type="GO" id="GO:0005634">
    <property type="term" value="C:nucleus"/>
    <property type="evidence" value="ECO:0007669"/>
    <property type="project" value="UniProtKB-SubCell"/>
</dbReference>
<dbReference type="GO" id="GO:0003677">
    <property type="term" value="F:DNA binding"/>
    <property type="evidence" value="ECO:0007669"/>
    <property type="project" value="UniProtKB-KW"/>
</dbReference>
<dbReference type="GO" id="GO:0030527">
    <property type="term" value="F:structural constituent of chromatin"/>
    <property type="evidence" value="ECO:0007669"/>
    <property type="project" value="InterPro"/>
</dbReference>
<dbReference type="GO" id="GO:0006334">
    <property type="term" value="P:nucleosome assembly"/>
    <property type="evidence" value="ECO:0007669"/>
    <property type="project" value="InterPro"/>
</dbReference>
<dbReference type="CDD" id="cd00073">
    <property type="entry name" value="H15"/>
    <property type="match status" value="1"/>
</dbReference>
<dbReference type="FunFam" id="1.10.10.10:FF:000075">
    <property type="entry name" value="Histone H1 like"/>
    <property type="match status" value="1"/>
</dbReference>
<dbReference type="Gene3D" id="1.10.10.10">
    <property type="entry name" value="Winged helix-like DNA-binding domain superfamily/Winged helix DNA-binding domain"/>
    <property type="match status" value="1"/>
</dbReference>
<dbReference type="InterPro" id="IPR005819">
    <property type="entry name" value="H1/H5"/>
</dbReference>
<dbReference type="InterPro" id="IPR005818">
    <property type="entry name" value="Histone_H1/H5_H15"/>
</dbReference>
<dbReference type="InterPro" id="IPR036388">
    <property type="entry name" value="WH-like_DNA-bd_sf"/>
</dbReference>
<dbReference type="InterPro" id="IPR036390">
    <property type="entry name" value="WH_DNA-bd_sf"/>
</dbReference>
<dbReference type="Pfam" id="PF00538">
    <property type="entry name" value="Linker_histone"/>
    <property type="match status" value="1"/>
</dbReference>
<dbReference type="PRINTS" id="PR00624">
    <property type="entry name" value="HISTONEH5"/>
</dbReference>
<dbReference type="SMART" id="SM00526">
    <property type="entry name" value="H15"/>
    <property type="match status" value="1"/>
</dbReference>
<dbReference type="SUPFAM" id="SSF46785">
    <property type="entry name" value="Winged helix' DNA-binding domain"/>
    <property type="match status" value="1"/>
</dbReference>
<dbReference type="PROSITE" id="PS51504">
    <property type="entry name" value="H15"/>
    <property type="match status" value="1"/>
</dbReference>